<keyword id="KW-0966">Cell projection</keyword>
<keyword id="KW-0968">Cytoplasmic vesicle</keyword>
<keyword id="KW-0256">Endoplasmic reticulum</keyword>
<keyword id="KW-0967">Endosome</keyword>
<keyword id="KW-0333">Golgi apparatus</keyword>
<keyword id="KW-0458">Lysosome</keyword>
<keyword id="KW-0472">Membrane</keyword>
<keyword id="KW-1185">Reference proteome</keyword>
<keyword id="KW-0735">Signal-anchor</keyword>
<keyword id="KW-0812">Transmembrane</keyword>
<keyword id="KW-1133">Transmembrane helix</keyword>
<name>NSG1_PONAB</name>
<reference key="1">
    <citation type="submission" date="2004-11" db="EMBL/GenBank/DDBJ databases">
        <authorList>
            <consortium name="The German cDNA consortium"/>
        </authorList>
    </citation>
    <scope>NUCLEOTIDE SEQUENCE [LARGE SCALE MRNA]</scope>
    <source>
        <tissue>Kidney</tissue>
    </source>
</reference>
<comment type="function">
    <text evidence="1 2 3">Plays a role in the recycling mechanism in neurons of multiple receptors, including AMPAR, APP and L1CAM and acts at the level of early endosomes to promote sorting of receptors toward a recycling pathway. Regulates sorting and recycling of GRIA2 through interaction with GRIP1 and then contributes to the regulation of synaptic transmission and plasticity by affecting the recycling and targeting of AMPA receptors to the synapse (By similarity). Is required for faithful sorting of L1CAM to axons by facilitating trafficking from somatodendritic early endosome or the recycling endosome (By similarity). In an other hand, induces apoptosis via the activation of CASP3 in response to DNA damage (By similarity).</text>
</comment>
<comment type="subunit">
    <text evidence="1 2 3">Forms a complex with GRIP1, GRIA2 and STX12 through direct interaction with GRIP1; controls the intracellular fate of AMPAR and the endosomal sorting of the GRIA2 subunit toward recycling and membrane targeting. Interacts with STX12 (By similarity). Interacts with APP; could regulate APP processing (By similarity). Interacts with FAM171A1 (By similarity).</text>
</comment>
<comment type="subcellular location">
    <subcellularLocation>
        <location evidence="1">Membrane</location>
        <topology evidence="1">Single-pass type II membrane protein</topology>
    </subcellularLocation>
    <subcellularLocation>
        <location evidence="1">Golgi apparatus</location>
        <location evidence="1">trans-Golgi network membrane</location>
    </subcellularLocation>
    <subcellularLocation>
        <location evidence="1">Endosome membrane</location>
    </subcellularLocation>
    <subcellularLocation>
        <location evidence="1">Cell projection</location>
        <location evidence="1">Dendrite</location>
    </subcellularLocation>
    <subcellularLocation>
        <location evidence="1">Early endosome membrane</location>
    </subcellularLocation>
    <subcellularLocation>
        <location evidence="1">Late endosome membrane</location>
    </subcellularLocation>
    <subcellularLocation>
        <location evidence="1">Lysosome lumen</location>
    </subcellularLocation>
    <subcellularLocation>
        <location evidence="1">Recycling endosome membrane</location>
    </subcellularLocation>
    <subcellularLocation>
        <location evidence="1">Cytoplasmic vesicle membrane</location>
    </subcellularLocation>
    <subcellularLocation>
        <location evidence="1">Golgi apparatus</location>
        <location evidence="1">Golgi stack membrane</location>
    </subcellularLocation>
    <subcellularLocation>
        <location evidence="1">Endosome</location>
        <location evidence="1">Multivesicular body membrane</location>
    </subcellularLocation>
    <subcellularLocation>
        <location evidence="2">Endoplasmic reticulum membrane</location>
    </subcellularLocation>
    <text evidence="1 2 3">Endocytosed from the cell surface, thus enters into early endosomes, trafficks to late endosomes and degradates in lysosomes (By similarity). Endoplasmic reticulum targeting is essential for apoptosis (By similarity). Found in both stationary and motile endosomes. A previous study supports a type I membrane protein topology (By similarity).</text>
</comment>
<comment type="similarity">
    <text evidence="5">Belongs to the NSG family.</text>
</comment>
<feature type="chain" id="PRO_0000253601" description="Neuronal vesicle trafficking-associated protein 1">
    <location>
        <begin position="1"/>
        <end position="185"/>
    </location>
</feature>
<feature type="topological domain" description="Cytoplasmic" evidence="1">
    <location>
        <begin position="1"/>
        <end position="82"/>
    </location>
</feature>
<feature type="transmembrane region" description="Helical; Signal-anchor for type II membrane protein" evidence="4">
    <location>
        <begin position="83"/>
        <end position="103"/>
    </location>
</feature>
<feature type="topological domain" description="Lumenal" evidence="1">
    <location>
        <begin position="104"/>
        <end position="185"/>
    </location>
</feature>
<feature type="region of interest" description="Required for GRIP1 interaction" evidence="1">
    <location>
        <begin position="129"/>
        <end position="164"/>
    </location>
</feature>
<proteinExistence type="evidence at transcript level"/>
<evidence type="ECO:0000250" key="1">
    <source>
        <dbReference type="UniProtKB" id="P02683"/>
    </source>
</evidence>
<evidence type="ECO:0000250" key="2">
    <source>
        <dbReference type="UniProtKB" id="P42857"/>
    </source>
</evidence>
<evidence type="ECO:0000250" key="3">
    <source>
        <dbReference type="UniProtKB" id="Q62092"/>
    </source>
</evidence>
<evidence type="ECO:0000255" key="4"/>
<evidence type="ECO:0000305" key="5"/>
<protein>
    <recommendedName>
        <fullName evidence="2">Neuronal vesicle trafficking-associated protein 1</fullName>
    </recommendedName>
    <alternativeName>
        <fullName evidence="2">Neuron-enriched endosomal protein of 21 kDa</fullName>
    </alternativeName>
    <alternativeName>
        <fullName evidence="2">Neuron-specific protein family member 1</fullName>
    </alternativeName>
</protein>
<sequence length="185" mass="20913">MVKLGNNFAEKGTKQPLLEDGFDTIPLMTPLDVNQLQFPPPDKVVVKTKTEYEPDRKKGKARPPQIAEFTVSITEGVTERFKVSVLVLFALAFLTCVVFLVVYKVYKYDRACPDGFVLKNTQCIPEGLESYYAEQDSSAREKFYTVINHYNLAKQSITRSVSPWMSVLSEEKLSEQETEAAEKSA</sequence>
<dbReference type="EMBL" id="CR857315">
    <property type="protein sequence ID" value="CAH89611.1"/>
    <property type="molecule type" value="mRNA"/>
</dbReference>
<dbReference type="RefSeq" id="NP_001124718.1">
    <property type="nucleotide sequence ID" value="NM_001131246.1"/>
</dbReference>
<dbReference type="FunCoup" id="Q5RF46">
    <property type="interactions" value="302"/>
</dbReference>
<dbReference type="STRING" id="9601.ENSPPYP00000016310"/>
<dbReference type="Ensembl" id="ENSPPYT00000056182.1">
    <property type="protein sequence ID" value="ENSPPYP00000029506.1"/>
    <property type="gene ID" value="ENSPPYG00000034452.1"/>
</dbReference>
<dbReference type="GeneID" id="100171567"/>
<dbReference type="KEGG" id="pon:100171567"/>
<dbReference type="CTD" id="27065"/>
<dbReference type="eggNOG" id="ENOG502QSAI">
    <property type="taxonomic scope" value="Eukaryota"/>
</dbReference>
<dbReference type="GeneTree" id="ENSGT00390000000483"/>
<dbReference type="HOGENOM" id="CLU_112085_1_0_1"/>
<dbReference type="InParanoid" id="Q5RF46"/>
<dbReference type="OMA" id="MQGRCMP"/>
<dbReference type="OrthoDB" id="8924576at2759"/>
<dbReference type="TreeFam" id="TF332232"/>
<dbReference type="Proteomes" id="UP000001595">
    <property type="component" value="Chromosome 4"/>
</dbReference>
<dbReference type="GO" id="GO:0030425">
    <property type="term" value="C:dendrite"/>
    <property type="evidence" value="ECO:0000250"/>
    <property type="project" value="UniProtKB"/>
</dbReference>
<dbReference type="GO" id="GO:0031901">
    <property type="term" value="C:early endosome membrane"/>
    <property type="evidence" value="ECO:0000250"/>
    <property type="project" value="UniProtKB"/>
</dbReference>
<dbReference type="GO" id="GO:0005783">
    <property type="term" value="C:endoplasmic reticulum"/>
    <property type="evidence" value="ECO:0000250"/>
    <property type="project" value="UniProtKB"/>
</dbReference>
<dbReference type="GO" id="GO:0005789">
    <property type="term" value="C:endoplasmic reticulum membrane"/>
    <property type="evidence" value="ECO:0007669"/>
    <property type="project" value="UniProtKB-SubCell"/>
</dbReference>
<dbReference type="GO" id="GO:0005768">
    <property type="term" value="C:endosome"/>
    <property type="evidence" value="ECO:0000250"/>
    <property type="project" value="UniProtKB"/>
</dbReference>
<dbReference type="GO" id="GO:0098978">
    <property type="term" value="C:glutamatergic synapse"/>
    <property type="evidence" value="ECO:0007669"/>
    <property type="project" value="Ensembl"/>
</dbReference>
<dbReference type="GO" id="GO:0032580">
    <property type="term" value="C:Golgi cisterna membrane"/>
    <property type="evidence" value="ECO:0007669"/>
    <property type="project" value="UniProtKB-SubCell"/>
</dbReference>
<dbReference type="GO" id="GO:0005770">
    <property type="term" value="C:late endosome"/>
    <property type="evidence" value="ECO:0000250"/>
    <property type="project" value="UniProtKB"/>
</dbReference>
<dbReference type="GO" id="GO:0016328">
    <property type="term" value="C:lateral plasma membrane"/>
    <property type="evidence" value="ECO:0007669"/>
    <property type="project" value="Ensembl"/>
</dbReference>
<dbReference type="GO" id="GO:0043202">
    <property type="term" value="C:lysosomal lumen"/>
    <property type="evidence" value="ECO:0007669"/>
    <property type="project" value="UniProtKB-SubCell"/>
</dbReference>
<dbReference type="GO" id="GO:0032585">
    <property type="term" value="C:multivesicular body membrane"/>
    <property type="evidence" value="ECO:0007669"/>
    <property type="project" value="UniProtKB-SubCell"/>
</dbReference>
<dbReference type="GO" id="GO:0045211">
    <property type="term" value="C:postsynaptic membrane"/>
    <property type="evidence" value="ECO:0007669"/>
    <property type="project" value="Ensembl"/>
</dbReference>
<dbReference type="GO" id="GO:0055038">
    <property type="term" value="C:recycling endosome membrane"/>
    <property type="evidence" value="ECO:0000250"/>
    <property type="project" value="UniProtKB"/>
</dbReference>
<dbReference type="GO" id="GO:0036477">
    <property type="term" value="C:somatodendritic compartment"/>
    <property type="evidence" value="ECO:0000250"/>
    <property type="project" value="UniProtKB"/>
</dbReference>
<dbReference type="GO" id="GO:0032588">
    <property type="term" value="C:trans-Golgi network membrane"/>
    <property type="evidence" value="ECO:0000250"/>
    <property type="project" value="UniProtKB"/>
</dbReference>
<dbReference type="GO" id="GO:0032051">
    <property type="term" value="F:clathrin light chain binding"/>
    <property type="evidence" value="ECO:0007669"/>
    <property type="project" value="InterPro"/>
</dbReference>
<dbReference type="GO" id="GO:0042982">
    <property type="term" value="P:amyloid precursor protein metabolic process"/>
    <property type="evidence" value="ECO:0000250"/>
    <property type="project" value="UniProtKB"/>
</dbReference>
<dbReference type="GO" id="GO:0006915">
    <property type="term" value="P:apoptotic process"/>
    <property type="evidence" value="ECO:0000250"/>
    <property type="project" value="UniProtKB"/>
</dbReference>
<dbReference type="GO" id="GO:0048268">
    <property type="term" value="P:clathrin coat assembly"/>
    <property type="evidence" value="ECO:0007669"/>
    <property type="project" value="InterPro"/>
</dbReference>
<dbReference type="GO" id="GO:0099627">
    <property type="term" value="P:neurotransmitter receptor cycle"/>
    <property type="evidence" value="ECO:0000250"/>
    <property type="project" value="UniProtKB"/>
</dbReference>
<dbReference type="GO" id="GO:0098887">
    <property type="term" value="P:neurotransmitter receptor transport, endosome to postsynaptic membrane"/>
    <property type="evidence" value="ECO:0007669"/>
    <property type="project" value="Ensembl"/>
</dbReference>
<dbReference type="GO" id="GO:0099630">
    <property type="term" value="P:postsynaptic neurotransmitter receptor cycle"/>
    <property type="evidence" value="ECO:0000250"/>
    <property type="project" value="UniProtKB"/>
</dbReference>
<dbReference type="GO" id="GO:0001881">
    <property type="term" value="P:receptor recycling"/>
    <property type="evidence" value="ECO:0000250"/>
    <property type="project" value="UniProtKB"/>
</dbReference>
<dbReference type="GO" id="GO:1900271">
    <property type="term" value="P:regulation of long-term synaptic potentiation"/>
    <property type="evidence" value="ECO:0000250"/>
    <property type="project" value="UniProtKB"/>
</dbReference>
<dbReference type="GO" id="GO:0098814">
    <property type="term" value="P:spontaneous synaptic transmission"/>
    <property type="evidence" value="ECO:0000250"/>
    <property type="project" value="UniProtKB"/>
</dbReference>
<dbReference type="GO" id="GO:0099003">
    <property type="term" value="P:vesicle-mediated transport in synapse"/>
    <property type="evidence" value="ECO:0007669"/>
    <property type="project" value="Ensembl"/>
</dbReference>
<dbReference type="InterPro" id="IPR009431">
    <property type="entry name" value="NSG"/>
</dbReference>
<dbReference type="PANTHER" id="PTHR28546:SF3">
    <property type="entry name" value="NEURONAL VESICLE TRAFFICKING-ASSOCIATED PROTEIN 1"/>
    <property type="match status" value="1"/>
</dbReference>
<dbReference type="PANTHER" id="PTHR28546">
    <property type="entry name" value="NEURONAL VESICLE TRAFFICKING-ASSOCIATED PROTEIN 2-RELATED"/>
    <property type="match status" value="1"/>
</dbReference>
<dbReference type="Pfam" id="PF06387">
    <property type="entry name" value="Calcyon"/>
    <property type="match status" value="1"/>
</dbReference>
<dbReference type="PIRSF" id="PIRSF002383">
    <property type="entry name" value="Calcyon"/>
    <property type="match status" value="1"/>
</dbReference>
<accession>Q5RF46</accession>
<organism>
    <name type="scientific">Pongo abelii</name>
    <name type="common">Sumatran orangutan</name>
    <name type="synonym">Pongo pygmaeus abelii</name>
    <dbReference type="NCBI Taxonomy" id="9601"/>
    <lineage>
        <taxon>Eukaryota</taxon>
        <taxon>Metazoa</taxon>
        <taxon>Chordata</taxon>
        <taxon>Craniata</taxon>
        <taxon>Vertebrata</taxon>
        <taxon>Euteleostomi</taxon>
        <taxon>Mammalia</taxon>
        <taxon>Eutheria</taxon>
        <taxon>Euarchontoglires</taxon>
        <taxon>Primates</taxon>
        <taxon>Haplorrhini</taxon>
        <taxon>Catarrhini</taxon>
        <taxon>Hominidae</taxon>
        <taxon>Pongo</taxon>
    </lineage>
</organism>
<gene>
    <name evidence="2" type="primary">NSG1</name>
</gene>